<evidence type="ECO:0000255" key="1">
    <source>
        <dbReference type="HAMAP-Rule" id="MF_00096"/>
    </source>
</evidence>
<dbReference type="EMBL" id="BX571861">
    <property type="protein sequence ID" value="CAE13017.1"/>
    <property type="molecule type" value="Genomic_DNA"/>
</dbReference>
<dbReference type="RefSeq" id="WP_011145097.1">
    <property type="nucleotide sequence ID" value="NC_005126.1"/>
</dbReference>
<dbReference type="SMR" id="Q7N8K0"/>
<dbReference type="STRING" id="243265.plu0722"/>
<dbReference type="GeneID" id="48847017"/>
<dbReference type="KEGG" id="plu:plu0722"/>
<dbReference type="eggNOG" id="COG0249">
    <property type="taxonomic scope" value="Bacteria"/>
</dbReference>
<dbReference type="HOGENOM" id="CLU_002472_4_0_6"/>
<dbReference type="OrthoDB" id="9802448at2"/>
<dbReference type="Proteomes" id="UP000002514">
    <property type="component" value="Chromosome"/>
</dbReference>
<dbReference type="GO" id="GO:0005829">
    <property type="term" value="C:cytosol"/>
    <property type="evidence" value="ECO:0007669"/>
    <property type="project" value="TreeGrafter"/>
</dbReference>
<dbReference type="GO" id="GO:0005524">
    <property type="term" value="F:ATP binding"/>
    <property type="evidence" value="ECO:0007669"/>
    <property type="project" value="UniProtKB-UniRule"/>
</dbReference>
<dbReference type="GO" id="GO:0140664">
    <property type="term" value="F:ATP-dependent DNA damage sensor activity"/>
    <property type="evidence" value="ECO:0007669"/>
    <property type="project" value="InterPro"/>
</dbReference>
<dbReference type="GO" id="GO:0003684">
    <property type="term" value="F:damaged DNA binding"/>
    <property type="evidence" value="ECO:0007669"/>
    <property type="project" value="UniProtKB-UniRule"/>
</dbReference>
<dbReference type="GO" id="GO:0030983">
    <property type="term" value="F:mismatched DNA binding"/>
    <property type="evidence" value="ECO:0007669"/>
    <property type="project" value="InterPro"/>
</dbReference>
<dbReference type="GO" id="GO:0006298">
    <property type="term" value="P:mismatch repair"/>
    <property type="evidence" value="ECO:0007669"/>
    <property type="project" value="UniProtKB-UniRule"/>
</dbReference>
<dbReference type="CDD" id="cd03284">
    <property type="entry name" value="ABC_MutS1"/>
    <property type="match status" value="1"/>
</dbReference>
<dbReference type="FunFam" id="1.10.1420.10:FF:000002">
    <property type="entry name" value="DNA mismatch repair protein MutS"/>
    <property type="match status" value="1"/>
</dbReference>
<dbReference type="FunFam" id="3.30.420.110:FF:000001">
    <property type="entry name" value="DNA mismatch repair protein MutS"/>
    <property type="match status" value="1"/>
</dbReference>
<dbReference type="FunFam" id="3.40.1170.10:FF:000001">
    <property type="entry name" value="DNA mismatch repair protein MutS"/>
    <property type="match status" value="1"/>
</dbReference>
<dbReference type="FunFam" id="3.40.50.300:FF:000283">
    <property type="entry name" value="DNA mismatch repair protein MutS"/>
    <property type="match status" value="1"/>
</dbReference>
<dbReference type="Gene3D" id="1.10.1420.10">
    <property type="match status" value="2"/>
</dbReference>
<dbReference type="Gene3D" id="6.10.140.430">
    <property type="match status" value="1"/>
</dbReference>
<dbReference type="Gene3D" id="3.40.1170.10">
    <property type="entry name" value="DNA repair protein MutS, domain I"/>
    <property type="match status" value="1"/>
</dbReference>
<dbReference type="Gene3D" id="3.30.420.110">
    <property type="entry name" value="MutS, connector domain"/>
    <property type="match status" value="1"/>
</dbReference>
<dbReference type="Gene3D" id="3.40.50.300">
    <property type="entry name" value="P-loop containing nucleotide triphosphate hydrolases"/>
    <property type="match status" value="1"/>
</dbReference>
<dbReference type="HAMAP" id="MF_00096">
    <property type="entry name" value="MutS"/>
    <property type="match status" value="1"/>
</dbReference>
<dbReference type="InterPro" id="IPR005748">
    <property type="entry name" value="DNA_mismatch_repair_MutS"/>
</dbReference>
<dbReference type="InterPro" id="IPR007695">
    <property type="entry name" value="DNA_mismatch_repair_MutS-lik_N"/>
</dbReference>
<dbReference type="InterPro" id="IPR017261">
    <property type="entry name" value="DNA_mismatch_repair_MutS/MSH"/>
</dbReference>
<dbReference type="InterPro" id="IPR000432">
    <property type="entry name" value="DNA_mismatch_repair_MutS_C"/>
</dbReference>
<dbReference type="InterPro" id="IPR007861">
    <property type="entry name" value="DNA_mismatch_repair_MutS_clamp"/>
</dbReference>
<dbReference type="InterPro" id="IPR007696">
    <property type="entry name" value="DNA_mismatch_repair_MutS_core"/>
</dbReference>
<dbReference type="InterPro" id="IPR016151">
    <property type="entry name" value="DNA_mismatch_repair_MutS_N"/>
</dbReference>
<dbReference type="InterPro" id="IPR036187">
    <property type="entry name" value="DNA_mismatch_repair_MutS_sf"/>
</dbReference>
<dbReference type="InterPro" id="IPR007860">
    <property type="entry name" value="DNA_mmatch_repair_MutS_con_dom"/>
</dbReference>
<dbReference type="InterPro" id="IPR045076">
    <property type="entry name" value="MutS"/>
</dbReference>
<dbReference type="InterPro" id="IPR036678">
    <property type="entry name" value="MutS_con_dom_sf"/>
</dbReference>
<dbReference type="InterPro" id="IPR027417">
    <property type="entry name" value="P-loop_NTPase"/>
</dbReference>
<dbReference type="NCBIfam" id="TIGR01070">
    <property type="entry name" value="mutS1"/>
    <property type="match status" value="1"/>
</dbReference>
<dbReference type="NCBIfam" id="NF003810">
    <property type="entry name" value="PRK05399.1"/>
    <property type="match status" value="1"/>
</dbReference>
<dbReference type="PANTHER" id="PTHR11361:SF34">
    <property type="entry name" value="DNA MISMATCH REPAIR PROTEIN MSH1, MITOCHONDRIAL"/>
    <property type="match status" value="1"/>
</dbReference>
<dbReference type="PANTHER" id="PTHR11361">
    <property type="entry name" value="DNA MISMATCH REPAIR PROTEIN MUTS FAMILY MEMBER"/>
    <property type="match status" value="1"/>
</dbReference>
<dbReference type="Pfam" id="PF01624">
    <property type="entry name" value="MutS_I"/>
    <property type="match status" value="1"/>
</dbReference>
<dbReference type="Pfam" id="PF05188">
    <property type="entry name" value="MutS_II"/>
    <property type="match status" value="1"/>
</dbReference>
<dbReference type="Pfam" id="PF05192">
    <property type="entry name" value="MutS_III"/>
    <property type="match status" value="1"/>
</dbReference>
<dbReference type="Pfam" id="PF05190">
    <property type="entry name" value="MutS_IV"/>
    <property type="match status" value="1"/>
</dbReference>
<dbReference type="Pfam" id="PF00488">
    <property type="entry name" value="MutS_V"/>
    <property type="match status" value="1"/>
</dbReference>
<dbReference type="PIRSF" id="PIRSF037677">
    <property type="entry name" value="DNA_mis_repair_Msh6"/>
    <property type="match status" value="1"/>
</dbReference>
<dbReference type="SMART" id="SM00534">
    <property type="entry name" value="MUTSac"/>
    <property type="match status" value="1"/>
</dbReference>
<dbReference type="SMART" id="SM00533">
    <property type="entry name" value="MUTSd"/>
    <property type="match status" value="1"/>
</dbReference>
<dbReference type="SUPFAM" id="SSF55271">
    <property type="entry name" value="DNA repair protein MutS, domain I"/>
    <property type="match status" value="1"/>
</dbReference>
<dbReference type="SUPFAM" id="SSF53150">
    <property type="entry name" value="DNA repair protein MutS, domain II"/>
    <property type="match status" value="1"/>
</dbReference>
<dbReference type="SUPFAM" id="SSF48334">
    <property type="entry name" value="DNA repair protein MutS, domain III"/>
    <property type="match status" value="1"/>
</dbReference>
<dbReference type="SUPFAM" id="SSF52540">
    <property type="entry name" value="P-loop containing nucleoside triphosphate hydrolases"/>
    <property type="match status" value="1"/>
</dbReference>
<dbReference type="PROSITE" id="PS00486">
    <property type="entry name" value="DNA_MISMATCH_REPAIR_2"/>
    <property type="match status" value="1"/>
</dbReference>
<proteinExistence type="inferred from homology"/>
<sequence>MINTETFDTHTPMMQQYLRLKAQHPDILLFYRMGDFYELFYDDAKKAAKLLDISLTKRGQSAGNPIPMAGVPHHAVENYLAKLVQLGESVAICEQIGDPATSKGPVERKVVRIVTPGTVTDEALLQERQDNLLAAIWHDNQGFGYATLDVTSGRFQISEMIELETIAAELQRSRPVELLYPESFEHMALIENFHGLRRRPLWEFELDTAKQQLNLQFGTRDLVGFGVDKATLALRAAGCLLQYVKDTQRTALPHIRGITMERQQDTVIMDAATRRNLELTQNLSGSTDNTLASVLDLCVTPMGSRMLKRWLHAPVRDRQILENRQQAIATLQEIGLELQPFLLQIGDLERVLARLALRSARPRDLARMRHAFQQLPDIHQVMDSSDSPYIKQLQKNIGRFDELQELLEKAIVETPPVLIRDGGVIAPGYNSELDEWRTLADGASNYLEQLEIREREKLGLDTLKVGFNGVHGYYIQVSRGQSHLVPIHYVRRQTLKNAERYIIPELKEYEDKVLTSKGKSLAIEKALYEELFDLLLPHLAELQTSAEALAELDVLANLAERAETLNYICPTLSDKPGIQITGGRHPVVEQVLREPFISNPLSLSSQRRLLIITGPNMGGKSTYMRQAALITLLAYIGSFVPAEKAVIGPVDRIFTRVGASDDLASGRSTFMVEMTETANILHNATEQSLVLMDEIGRGTSTYDGLSLAWACAENLANRIKAMTLFATHYFELTTLPEKLEGVVNIHLDAVEHGDTIAFMHSVQEGAASKSYGLAVASLAGVPREVIKRARQKLKELESLSNHATASHVDTPQLALLTEETSPAVEALENLNPDSLTPRQALEWIYRLKDMV</sequence>
<feature type="chain" id="PRO_0000115116" description="DNA mismatch repair protein MutS">
    <location>
        <begin position="1"/>
        <end position="851"/>
    </location>
</feature>
<feature type="binding site" evidence="1">
    <location>
        <begin position="614"/>
        <end position="621"/>
    </location>
    <ligand>
        <name>ATP</name>
        <dbReference type="ChEBI" id="CHEBI:30616"/>
    </ligand>
</feature>
<organism>
    <name type="scientific">Photorhabdus laumondii subsp. laumondii (strain DSM 15139 / CIP 105565 / TT01)</name>
    <name type="common">Photorhabdus luminescens subsp. laumondii</name>
    <dbReference type="NCBI Taxonomy" id="243265"/>
    <lineage>
        <taxon>Bacteria</taxon>
        <taxon>Pseudomonadati</taxon>
        <taxon>Pseudomonadota</taxon>
        <taxon>Gammaproteobacteria</taxon>
        <taxon>Enterobacterales</taxon>
        <taxon>Morganellaceae</taxon>
        <taxon>Photorhabdus</taxon>
    </lineage>
</organism>
<protein>
    <recommendedName>
        <fullName evidence="1">DNA mismatch repair protein MutS</fullName>
    </recommendedName>
</protein>
<reference key="1">
    <citation type="journal article" date="2003" name="Nat. Biotechnol.">
        <title>The genome sequence of the entomopathogenic bacterium Photorhabdus luminescens.</title>
        <authorList>
            <person name="Duchaud E."/>
            <person name="Rusniok C."/>
            <person name="Frangeul L."/>
            <person name="Buchrieser C."/>
            <person name="Givaudan A."/>
            <person name="Taourit S."/>
            <person name="Bocs S."/>
            <person name="Boursaux-Eude C."/>
            <person name="Chandler M."/>
            <person name="Charles J.-F."/>
            <person name="Dassa E."/>
            <person name="Derose R."/>
            <person name="Derzelle S."/>
            <person name="Freyssinet G."/>
            <person name="Gaudriault S."/>
            <person name="Medigue C."/>
            <person name="Lanois A."/>
            <person name="Powell K."/>
            <person name="Siguier P."/>
            <person name="Vincent R."/>
            <person name="Wingate V."/>
            <person name="Zouine M."/>
            <person name="Glaser P."/>
            <person name="Boemare N."/>
            <person name="Danchin A."/>
            <person name="Kunst F."/>
        </authorList>
    </citation>
    <scope>NUCLEOTIDE SEQUENCE [LARGE SCALE GENOMIC DNA]</scope>
    <source>
        <strain>DSM 15139 / CIP 105565 / TT01</strain>
    </source>
</reference>
<keyword id="KW-0067">ATP-binding</keyword>
<keyword id="KW-0227">DNA damage</keyword>
<keyword id="KW-0234">DNA repair</keyword>
<keyword id="KW-0238">DNA-binding</keyword>
<keyword id="KW-0547">Nucleotide-binding</keyword>
<keyword id="KW-1185">Reference proteome</keyword>
<accession>Q7N8K0</accession>
<comment type="function">
    <text evidence="1">This protein is involved in the repair of mismatches in DNA. It is possible that it carries out the mismatch recognition step. This protein has a weak ATPase activity.</text>
</comment>
<comment type="similarity">
    <text evidence="1">Belongs to the DNA mismatch repair MutS family.</text>
</comment>
<gene>
    <name evidence="1" type="primary">mutS</name>
    <name type="ordered locus">plu0722</name>
</gene>
<name>MUTS_PHOLL</name>